<keyword id="KW-0119">Carbohydrate metabolism</keyword>
<keyword id="KW-0963">Cytoplasm</keyword>
<keyword id="KW-0413">Isomerase</keyword>
<keyword id="KW-0479">Metal-binding</keyword>
<keyword id="KW-1185">Reference proteome</keyword>
<keyword id="KW-0862">Zinc</keyword>
<sequence>MLERIKDSFTHSIQTKIDASEALPESIAKAAEMMVHCLLGGNKILACGNGGSAGDAQHFSAELLNRFEVERPPLPAIALTTDTSTITAIANDYSYDEIFSKQILALGQPGDILLAISTSGHSGNVIKAIEAALSRDMTIVALTGKDGGPMAGLLSINDVEIRVPSNSTARIQEVHLLAIHCLCDNIDRTLFPQDEQQ</sequence>
<proteinExistence type="inferred from homology"/>
<feature type="chain" id="PRO_1000197025" description="Phosphoheptose isomerase">
    <location>
        <begin position="1"/>
        <end position="197"/>
    </location>
</feature>
<feature type="domain" description="SIS" evidence="1">
    <location>
        <begin position="34"/>
        <end position="196"/>
    </location>
</feature>
<feature type="binding site" evidence="1">
    <location>
        <begin position="49"/>
        <end position="51"/>
    </location>
    <ligand>
        <name>substrate</name>
    </ligand>
</feature>
<feature type="binding site" evidence="1">
    <location>
        <position position="58"/>
    </location>
    <ligand>
        <name>Zn(2+)</name>
        <dbReference type="ChEBI" id="CHEBI:29105"/>
    </ligand>
</feature>
<feature type="binding site" evidence="1">
    <location>
        <position position="62"/>
    </location>
    <ligand>
        <name>substrate</name>
    </ligand>
</feature>
<feature type="binding site" evidence="1">
    <location>
        <position position="62"/>
    </location>
    <ligand>
        <name>Zn(2+)</name>
        <dbReference type="ChEBI" id="CHEBI:29105"/>
    </ligand>
</feature>
<feature type="binding site" evidence="1">
    <location>
        <begin position="91"/>
        <end position="92"/>
    </location>
    <ligand>
        <name>substrate</name>
    </ligand>
</feature>
<feature type="binding site" evidence="1">
    <location>
        <begin position="117"/>
        <end position="119"/>
    </location>
    <ligand>
        <name>substrate</name>
    </ligand>
</feature>
<feature type="binding site" evidence="1">
    <location>
        <position position="122"/>
    </location>
    <ligand>
        <name>substrate</name>
    </ligand>
</feature>
<feature type="binding site" evidence="1">
    <location>
        <position position="172"/>
    </location>
    <ligand>
        <name>substrate</name>
    </ligand>
</feature>
<feature type="binding site" evidence="1">
    <location>
        <position position="172"/>
    </location>
    <ligand>
        <name>Zn(2+)</name>
        <dbReference type="ChEBI" id="CHEBI:29105"/>
    </ligand>
</feature>
<feature type="binding site" evidence="1">
    <location>
        <position position="180"/>
    </location>
    <ligand>
        <name>Zn(2+)</name>
        <dbReference type="ChEBI" id="CHEBI:29105"/>
    </ligand>
</feature>
<reference key="1">
    <citation type="submission" date="2007-08" db="EMBL/GenBank/DDBJ databases">
        <title>Complete sequence of Shewanella sediminis HAW-EB3.</title>
        <authorList>
            <consortium name="US DOE Joint Genome Institute"/>
            <person name="Copeland A."/>
            <person name="Lucas S."/>
            <person name="Lapidus A."/>
            <person name="Barry K."/>
            <person name="Glavina del Rio T."/>
            <person name="Dalin E."/>
            <person name="Tice H."/>
            <person name="Pitluck S."/>
            <person name="Chertkov O."/>
            <person name="Brettin T."/>
            <person name="Bruce D."/>
            <person name="Detter J.C."/>
            <person name="Han C."/>
            <person name="Schmutz J."/>
            <person name="Larimer F."/>
            <person name="Land M."/>
            <person name="Hauser L."/>
            <person name="Kyrpides N."/>
            <person name="Kim E."/>
            <person name="Zhao J.-S."/>
            <person name="Richardson P."/>
        </authorList>
    </citation>
    <scope>NUCLEOTIDE SEQUENCE [LARGE SCALE GENOMIC DNA]</scope>
    <source>
        <strain>HAW-EB3</strain>
    </source>
</reference>
<evidence type="ECO:0000255" key="1">
    <source>
        <dbReference type="HAMAP-Rule" id="MF_00067"/>
    </source>
</evidence>
<accession>A8G184</accession>
<dbReference type="EC" id="5.3.1.28" evidence="1"/>
<dbReference type="EMBL" id="CP000821">
    <property type="protein sequence ID" value="ABV38857.1"/>
    <property type="molecule type" value="Genomic_DNA"/>
</dbReference>
<dbReference type="RefSeq" id="WP_012144586.1">
    <property type="nucleotide sequence ID" value="NC_009831.1"/>
</dbReference>
<dbReference type="SMR" id="A8G184"/>
<dbReference type="STRING" id="425104.Ssed_4253"/>
<dbReference type="KEGG" id="sse:Ssed_4253"/>
<dbReference type="eggNOG" id="COG0279">
    <property type="taxonomic scope" value="Bacteria"/>
</dbReference>
<dbReference type="HOGENOM" id="CLU_080999_4_0_6"/>
<dbReference type="OrthoDB" id="9810929at2"/>
<dbReference type="UniPathway" id="UPA00041">
    <property type="reaction ID" value="UER00436"/>
</dbReference>
<dbReference type="Proteomes" id="UP000002015">
    <property type="component" value="Chromosome"/>
</dbReference>
<dbReference type="GO" id="GO:0005737">
    <property type="term" value="C:cytoplasm"/>
    <property type="evidence" value="ECO:0007669"/>
    <property type="project" value="UniProtKB-SubCell"/>
</dbReference>
<dbReference type="GO" id="GO:0097367">
    <property type="term" value="F:carbohydrate derivative binding"/>
    <property type="evidence" value="ECO:0007669"/>
    <property type="project" value="InterPro"/>
</dbReference>
<dbReference type="GO" id="GO:0008968">
    <property type="term" value="F:D-sedoheptulose 7-phosphate isomerase activity"/>
    <property type="evidence" value="ECO:0007669"/>
    <property type="project" value="UniProtKB-UniRule"/>
</dbReference>
<dbReference type="GO" id="GO:0008270">
    <property type="term" value="F:zinc ion binding"/>
    <property type="evidence" value="ECO:0007669"/>
    <property type="project" value="UniProtKB-UniRule"/>
</dbReference>
<dbReference type="GO" id="GO:0005975">
    <property type="term" value="P:carbohydrate metabolic process"/>
    <property type="evidence" value="ECO:0007669"/>
    <property type="project" value="UniProtKB-UniRule"/>
</dbReference>
<dbReference type="GO" id="GO:2001061">
    <property type="term" value="P:D-glycero-D-manno-heptose 7-phosphate biosynthetic process"/>
    <property type="evidence" value="ECO:0007669"/>
    <property type="project" value="UniProtKB-UniPathway"/>
</dbReference>
<dbReference type="CDD" id="cd05006">
    <property type="entry name" value="SIS_GmhA"/>
    <property type="match status" value="1"/>
</dbReference>
<dbReference type="Gene3D" id="3.40.50.10490">
    <property type="entry name" value="Glucose-6-phosphate isomerase like protein, domain 1"/>
    <property type="match status" value="1"/>
</dbReference>
<dbReference type="HAMAP" id="MF_00067">
    <property type="entry name" value="GmhA"/>
    <property type="match status" value="1"/>
</dbReference>
<dbReference type="InterPro" id="IPR035461">
    <property type="entry name" value="GmhA/DiaA"/>
</dbReference>
<dbReference type="InterPro" id="IPR004515">
    <property type="entry name" value="Phosphoheptose_Isoase"/>
</dbReference>
<dbReference type="InterPro" id="IPR001347">
    <property type="entry name" value="SIS_dom"/>
</dbReference>
<dbReference type="InterPro" id="IPR046348">
    <property type="entry name" value="SIS_dom_sf"/>
</dbReference>
<dbReference type="InterPro" id="IPR050099">
    <property type="entry name" value="SIS_GmhA/DiaA_subfam"/>
</dbReference>
<dbReference type="NCBIfam" id="NF010546">
    <property type="entry name" value="PRK13936.1"/>
    <property type="match status" value="1"/>
</dbReference>
<dbReference type="PANTHER" id="PTHR30390:SF6">
    <property type="entry name" value="DNAA INITIATOR-ASSOCIATING PROTEIN DIAA"/>
    <property type="match status" value="1"/>
</dbReference>
<dbReference type="PANTHER" id="PTHR30390">
    <property type="entry name" value="SEDOHEPTULOSE 7-PHOSPHATE ISOMERASE / DNAA INITIATOR-ASSOCIATING FACTOR FOR REPLICATION INITIATION"/>
    <property type="match status" value="1"/>
</dbReference>
<dbReference type="Pfam" id="PF13580">
    <property type="entry name" value="SIS_2"/>
    <property type="match status" value="1"/>
</dbReference>
<dbReference type="SUPFAM" id="SSF53697">
    <property type="entry name" value="SIS domain"/>
    <property type="match status" value="1"/>
</dbReference>
<dbReference type="PROSITE" id="PS51464">
    <property type="entry name" value="SIS"/>
    <property type="match status" value="1"/>
</dbReference>
<organism>
    <name type="scientific">Shewanella sediminis (strain HAW-EB3)</name>
    <dbReference type="NCBI Taxonomy" id="425104"/>
    <lineage>
        <taxon>Bacteria</taxon>
        <taxon>Pseudomonadati</taxon>
        <taxon>Pseudomonadota</taxon>
        <taxon>Gammaproteobacteria</taxon>
        <taxon>Alteromonadales</taxon>
        <taxon>Shewanellaceae</taxon>
        <taxon>Shewanella</taxon>
    </lineage>
</organism>
<protein>
    <recommendedName>
        <fullName evidence="1">Phosphoheptose isomerase</fullName>
        <ecNumber evidence="1">5.3.1.28</ecNumber>
    </recommendedName>
    <alternativeName>
        <fullName evidence="1">Sedoheptulose 7-phosphate isomerase</fullName>
    </alternativeName>
</protein>
<name>GMHA_SHESH</name>
<gene>
    <name evidence="1" type="primary">gmhA</name>
    <name type="ordered locus">Ssed_4253</name>
</gene>
<comment type="function">
    <text evidence="1">Catalyzes the isomerization of sedoheptulose 7-phosphate in D-glycero-D-manno-heptose 7-phosphate.</text>
</comment>
<comment type="catalytic activity">
    <reaction evidence="1">
        <text>2 D-sedoheptulose 7-phosphate = D-glycero-alpha-D-manno-heptose 7-phosphate + D-glycero-beta-D-manno-heptose 7-phosphate</text>
        <dbReference type="Rhea" id="RHEA:27489"/>
        <dbReference type="ChEBI" id="CHEBI:57483"/>
        <dbReference type="ChEBI" id="CHEBI:60203"/>
        <dbReference type="ChEBI" id="CHEBI:60204"/>
        <dbReference type="EC" id="5.3.1.28"/>
    </reaction>
</comment>
<comment type="cofactor">
    <cofactor evidence="1">
        <name>Zn(2+)</name>
        <dbReference type="ChEBI" id="CHEBI:29105"/>
    </cofactor>
    <text evidence="1">Binds 1 zinc ion per subunit.</text>
</comment>
<comment type="pathway">
    <text evidence="1">Carbohydrate biosynthesis; D-glycero-D-manno-heptose 7-phosphate biosynthesis; D-glycero-alpha-D-manno-heptose 7-phosphate and D-glycero-beta-D-manno-heptose 7-phosphate from sedoheptulose 7-phosphate: step 1/1.</text>
</comment>
<comment type="subunit">
    <text evidence="1">Homotetramer.</text>
</comment>
<comment type="subcellular location">
    <subcellularLocation>
        <location evidence="1">Cytoplasm</location>
    </subcellularLocation>
</comment>
<comment type="miscellaneous">
    <text evidence="1">The reaction produces a racemic mixture of D-glycero-alpha-D-manno-heptose 7-phosphate and D-glycero-beta-D-manno-heptose 7-phosphate.</text>
</comment>
<comment type="similarity">
    <text evidence="1">Belongs to the SIS family. GmhA subfamily.</text>
</comment>